<accession>Q9NII7</accession>
<accession>Q9UAC7</accession>
<keyword id="KW-0002">3D-structure</keyword>
<keyword id="KW-0027">Amidation</keyword>
<keyword id="KW-0903">Direct protein sequencing</keyword>
<keyword id="KW-1015">Disulfide bond</keyword>
<keyword id="KW-0872">Ion channel impairing toxin</keyword>
<keyword id="KW-0528">Neurotoxin</keyword>
<keyword id="KW-0632">Potassium channel impairing toxin</keyword>
<keyword id="KW-0964">Secreted</keyword>
<keyword id="KW-0732">Signal</keyword>
<keyword id="KW-0800">Toxin</keyword>
<keyword id="KW-1220">Voltage-gated potassium channel impairing toxin</keyword>
<dbReference type="EMBL" id="AF208298">
    <property type="protein sequence ID" value="AAF63970.1"/>
    <property type="molecule type" value="Genomic_DNA"/>
</dbReference>
<dbReference type="EMBL" id="AF079062">
    <property type="protein sequence ID" value="AAD47376.1"/>
    <property type="molecule type" value="mRNA"/>
</dbReference>
<dbReference type="PDB" id="1BKT">
    <property type="method" value="NMR"/>
    <property type="chains" value="A=23-59"/>
</dbReference>
<dbReference type="PDB" id="2K4U">
    <property type="method" value="NMR"/>
    <property type="chains" value="A=23-59"/>
</dbReference>
<dbReference type="PDB" id="2MLA">
    <property type="method" value="NMR"/>
    <property type="chains" value="A=23-59"/>
</dbReference>
<dbReference type="PDB" id="2MLD">
    <property type="method" value="NMR"/>
    <property type="chains" value="A=23-59"/>
</dbReference>
<dbReference type="PDBsum" id="1BKT"/>
<dbReference type="PDBsum" id="2K4U"/>
<dbReference type="PDBsum" id="2MLA"/>
<dbReference type="PDBsum" id="2MLD"/>
<dbReference type="BMRB" id="Q9NII7"/>
<dbReference type="SMR" id="Q9NII7"/>
<dbReference type="EvolutionaryTrace" id="Q9NII7"/>
<dbReference type="GO" id="GO:0005576">
    <property type="term" value="C:extracellular region"/>
    <property type="evidence" value="ECO:0000314"/>
    <property type="project" value="UniProtKB"/>
</dbReference>
<dbReference type="GO" id="GO:0019870">
    <property type="term" value="F:potassium channel inhibitor activity"/>
    <property type="evidence" value="ECO:0000314"/>
    <property type="project" value="UniProtKB"/>
</dbReference>
<dbReference type="GO" id="GO:0090729">
    <property type="term" value="F:toxin activity"/>
    <property type="evidence" value="ECO:0007669"/>
    <property type="project" value="UniProtKB-KW"/>
</dbReference>
<dbReference type="FunFam" id="3.30.30.10:FF:000009">
    <property type="entry name" value="Potassium channel toxin alpha-KTx 4.3"/>
    <property type="match status" value="1"/>
</dbReference>
<dbReference type="Gene3D" id="3.30.30.10">
    <property type="entry name" value="Knottin, scorpion toxin-like"/>
    <property type="match status" value="1"/>
</dbReference>
<dbReference type="InterPro" id="IPR036574">
    <property type="entry name" value="Scorpion_toxin-like_sf"/>
</dbReference>
<dbReference type="InterPro" id="IPR001947">
    <property type="entry name" value="Scorpion_toxinS_K_inh"/>
</dbReference>
<dbReference type="Pfam" id="PF00451">
    <property type="entry name" value="Toxin_2"/>
    <property type="match status" value="1"/>
</dbReference>
<dbReference type="PRINTS" id="PR00286">
    <property type="entry name" value="CHARYBDTOXIN"/>
</dbReference>
<dbReference type="SUPFAM" id="SSF57095">
    <property type="entry name" value="Scorpion toxin-like"/>
    <property type="match status" value="1"/>
</dbReference>
<dbReference type="PROSITE" id="PS01138">
    <property type="entry name" value="SCORP_SHORT_TOXIN"/>
    <property type="match status" value="1"/>
</dbReference>
<name>KAX36_OLIMR</name>
<proteinExistence type="evidence at protein level"/>
<evidence type="ECO:0000269" key="1">
    <source>
    </source>
</evidence>
<evidence type="ECO:0000269" key="2">
    <source>
    </source>
</evidence>
<evidence type="ECO:0000269" key="3">
    <source>
    </source>
</evidence>
<evidence type="ECO:0000269" key="4">
    <source>
    </source>
</evidence>
<evidence type="ECO:0000303" key="5">
    <source>
    </source>
</evidence>
<evidence type="ECO:0000305" key="6"/>
<evidence type="ECO:0000305" key="7">
    <source>
    </source>
</evidence>
<evidence type="ECO:0007829" key="8">
    <source>
        <dbReference type="PDB" id="1BKT"/>
    </source>
</evidence>
<evidence type="ECO:0007829" key="9">
    <source>
        <dbReference type="PDB" id="2MLA"/>
    </source>
</evidence>
<comment type="function">
    <text evidence="2 4">Blocks voltage-gated potassium channels. At 2 uM, blocks rat Kv1.1/KCNA1 and Kv1.3/KCNA3, has a strong effect on rat Kv1.2/KCNA2 and Kv1.6/KCNA6 as well as a moderate effect on Shaker IR.</text>
</comment>
<comment type="subcellular location">
    <subcellularLocation>
        <location evidence="2">Secreted</location>
    </subcellularLocation>
</comment>
<comment type="tissue specificity">
    <text evidence="7">Expressed by the venom gland.</text>
</comment>
<comment type="domain">
    <text>Has the structural arrangement of an alpha-helix connected to a beta-sheet by disulfide bonds (CSalpha/beta).</text>
</comment>
<comment type="mass spectrometry" mass="3960.88" method="MALDI" evidence="2"/>
<comment type="toxic dose">
    <text evidence="4">LD(50) is 2.0 ug/kg by intracerebroventricular injection into mice.</text>
</comment>
<comment type="miscellaneous">
    <text evidence="2 3 4">Negative results: has no effect on rat Kv1.4/KCNA4, Kv1.5/KCNA5, Kv4.1/KCND1 or human Kv11.1/KCNH2 and Kv3.1/KCNC1 (PubMed:20713119). Has no effect on bovine KCa1.1 (PubMed:20713119, PubMed:9354615). Does not inhibit the growth of Gram-positive and Gram-negative bacteria (PubMed:26817841).</text>
</comment>
<comment type="miscellaneous">
    <text evidence="6">The primary structure of this mature peptide is identical to that of toxin alpha-KTx 3.19 from Mesobuthus eupeus (AC C0HJQ6).</text>
</comment>
<comment type="similarity">
    <text evidence="6">Belongs to the short scorpion toxin superfamily. Potassium channel inhibitor family. Alpha-KTx 03 subfamily.</text>
</comment>
<feature type="signal peptide" evidence="4">
    <location>
        <begin position="1"/>
        <end position="22"/>
    </location>
</feature>
<feature type="chain" id="PRO_0000035314" description="Potassium channel toxin alpha-KTx 3.6" evidence="4">
    <location>
        <begin position="23"/>
        <end position="59"/>
    </location>
</feature>
<feature type="modified residue" description="Lysine amide" evidence="4">
    <location>
        <position position="59"/>
    </location>
</feature>
<feature type="disulfide bond" evidence="1">
    <location>
        <begin position="29"/>
        <end position="49"/>
    </location>
</feature>
<feature type="disulfide bond" evidence="1">
    <location>
        <begin position="35"/>
        <end position="54"/>
    </location>
</feature>
<feature type="disulfide bond" evidence="1">
    <location>
        <begin position="39"/>
        <end position="56"/>
    </location>
</feature>
<feature type="sequence conflict" description="In Ref. 2; AAD47376." evidence="6" ref="2">
    <original>C</original>
    <variation>S</variation>
    <location>
        <position position="14"/>
    </location>
</feature>
<feature type="strand" evidence="9">
    <location>
        <begin position="25"/>
        <end position="28"/>
    </location>
</feature>
<feature type="turn" evidence="8">
    <location>
        <begin position="32"/>
        <end position="35"/>
    </location>
</feature>
<feature type="helix" evidence="8">
    <location>
        <begin position="36"/>
        <end position="41"/>
    </location>
</feature>
<feature type="strand" evidence="8">
    <location>
        <begin position="47"/>
        <end position="49"/>
    </location>
</feature>
<feature type="strand" evidence="8">
    <location>
        <begin position="51"/>
        <end position="56"/>
    </location>
</feature>
<sequence length="60" mass="6462">MKVFFAVLITLFICSMIIGIHGVGINVKCKHSGQCLKPCKDAGMRFGKCINGKCDCTPKG</sequence>
<organism>
    <name type="scientific">Olivierus martensii</name>
    <name type="common">Manchurian scorpion</name>
    <name type="synonym">Mesobuthus martensii</name>
    <dbReference type="NCBI Taxonomy" id="34649"/>
    <lineage>
        <taxon>Eukaryota</taxon>
        <taxon>Metazoa</taxon>
        <taxon>Ecdysozoa</taxon>
        <taxon>Arthropoda</taxon>
        <taxon>Chelicerata</taxon>
        <taxon>Arachnida</taxon>
        <taxon>Scorpiones</taxon>
        <taxon>Buthida</taxon>
        <taxon>Buthoidea</taxon>
        <taxon>Buthidae</taxon>
        <taxon>Olivierus</taxon>
    </lineage>
</organism>
<protein>
    <recommendedName>
        <fullName>Potassium channel toxin alpha-KTx 3.6</fullName>
    </recommendedName>
    <alternativeName>
        <fullName evidence="5">BmKTX</fullName>
    </alternativeName>
</protein>
<reference key="1">
    <citation type="journal article" date="2000" name="Biochem. J.">
        <title>Genomic organization of three novel toxins from the scorpion Buthus martensi Karsch that are active on potassium channels.</title>
        <authorList>
            <person name="Dai L."/>
            <person name="Wu J.-J."/>
            <person name="Gu Y.-H."/>
            <person name="Lan Z.-D."/>
            <person name="Ling M.-H."/>
            <person name="Chi C.-W."/>
        </authorList>
    </citation>
    <scope>NUCLEOTIDE SEQUENCE [GENOMIC DNA]</scope>
</reference>
<reference key="2">
    <citation type="submission" date="1998-07" db="EMBL/GenBank/DDBJ databases">
        <authorList>
            <person name="Wu J.-J."/>
            <person name="Dai L."/>
            <person name="Chi C.-W."/>
        </authorList>
    </citation>
    <scope>NUCLEOTIDE SEQUENCE [MRNA]</scope>
</reference>
<reference key="3">
    <citation type="journal article" date="1997" name="Biochemistry">
        <title>Purification, characterization, and synthesis of three novel toxins from the Chinese scorpion Buthus martensi, which act on K+ channels.</title>
        <authorList>
            <person name="Romi-Lebrun R."/>
            <person name="Lebrun B."/>
            <person name="Martin-Eauclaire M.-F."/>
            <person name="Ishiguro M."/>
            <person name="Escoubas P."/>
            <person name="Wu F.Q."/>
            <person name="Hisada M."/>
            <person name="Pongs O."/>
            <person name="Nakajima T."/>
        </authorList>
    </citation>
    <scope>PROTEIN SEQUENCE OF 23-59</scope>
    <scope>TOXIC DOSE</scope>
    <scope>AMIDATION AT LYS-59</scope>
    <scope>SYNTHESIS OF 23-59</scope>
    <scope>FUNCTION</scope>
    <scope>ACTIVITY PROFILE</scope>
</reference>
<reference key="4">
    <citation type="journal article" date="2010" name="Biochimie">
        <title>A potent potassium channel blocker from Mesobuthus eupeus scorpion venom.</title>
        <authorList>
            <person name="Gao B."/>
            <person name="Peigneur S."/>
            <person name="Tytgat J."/>
            <person name="Zhu S."/>
        </authorList>
    </citation>
    <scope>FUNCTION</scope>
    <scope>SUBCELLULAR LOCATION</scope>
    <scope>MASS SPECTROMETRY</scope>
    <source>
        <tissue>Venom</tissue>
    </source>
</reference>
<reference key="5">
    <citation type="journal article" date="2016" name="J. Biol. Chem.">
        <title>Scorpion potassium channel-blocking defensin highlights a functional link with neurotoxin.</title>
        <authorList>
            <person name="Meng L."/>
            <person name="Xie Z."/>
            <person name="Zhang Q."/>
            <person name="Li Y."/>
            <person name="Yang F."/>
            <person name="Chen Z."/>
            <person name="Li W."/>
            <person name="Cao Z."/>
            <person name="Wu Y."/>
        </authorList>
    </citation>
    <scope>FUNCTION</scope>
</reference>
<reference key="6">
    <citation type="journal article" date="2000" name="Proteins">
        <title>Solution structure of BmKTX, a K+ blocker toxin from the Chinese scorpion Buthus Martensi.</title>
        <authorList>
            <person name="Renisio J.G."/>
            <person name="Romi-Lebrun R."/>
            <person name="Blanc E."/>
            <person name="Bornet O."/>
            <person name="Nakajima T."/>
            <person name="Darbon H."/>
        </authorList>
    </citation>
    <scope>STRUCTURE BY NMR OF 23-59</scope>
    <scope>DISULFIDE BONDS</scope>
</reference>